<protein>
    <recommendedName>
        <fullName>Plexin-A2</fullName>
    </recommendedName>
    <alternativeName>
        <fullName>Semaphorin receptor OCT</fullName>
    </alternativeName>
</protein>
<accession>O75051</accession>
<accession>A2RTX9</accession>
<accession>B2RMX7</accession>
<accession>Q6UX61</accession>
<accession>Q96GN9</accession>
<accession>Q9BRL1</accession>
<accession>Q9UIW1</accession>
<keyword id="KW-0002">3D-structure</keyword>
<keyword id="KW-0025">Alternative splicing</keyword>
<keyword id="KW-1003">Cell membrane</keyword>
<keyword id="KW-0175">Coiled coil</keyword>
<keyword id="KW-1015">Disulfide bond</keyword>
<keyword id="KW-0325">Glycoprotein</keyword>
<keyword id="KW-0472">Membrane</keyword>
<keyword id="KW-0597">Phosphoprotein</keyword>
<keyword id="KW-1267">Proteomics identification</keyword>
<keyword id="KW-1185">Reference proteome</keyword>
<keyword id="KW-0677">Repeat</keyword>
<keyword id="KW-0732">Signal</keyword>
<keyword id="KW-0812">Transmembrane</keyword>
<keyword id="KW-1133">Transmembrane helix</keyword>
<name>PLXA2_HUMAN</name>
<proteinExistence type="evidence at protein level"/>
<comment type="function">
    <text evidence="1 4">Coreceptor for SEMA3A and SEMA6A. Necessary for signaling by SEMA6A and class 3 semaphorins and subsequent remodeling of the cytoskeleton. Plays a role in axon guidance, invasive growth and cell migration. Class 3 semaphorins bind to a complex composed of a neuropilin and a plexin. The plexin modulates the affinity of the complex for specific semaphorins, and its cytoplasmic domain is required for the activation of down-stream signaling events in the cytoplasm (By similarity).</text>
</comment>
<comment type="subunit">
    <text evidence="1 9">Homodimer. The PLXNA2 homodimer interacts with a SEMA6A homodimer, giving rise to a heterotetramer. Interacts directly with NRP1 and NRP2 (By similarity). Interacts with RND1.</text>
</comment>
<comment type="interaction">
    <interactant intactId="EBI-308264">
        <id>O75051</id>
    </interactant>
    <interactant intactId="EBI-524514">
        <id>P39688</id>
        <label>Fyn</label>
    </interactant>
    <organismsDiffer>true</organismsDiffer>
    <experiments>3</experiments>
</comment>
<comment type="subcellular location">
    <subcellularLocation>
        <location evidence="1">Cell membrane</location>
        <topology evidence="1">Single-pass type I membrane protein</topology>
    </subcellularLocation>
</comment>
<comment type="alternative products">
    <event type="alternative splicing"/>
    <isoform>
        <id>O75051-1</id>
        <name>1</name>
        <sequence type="displayed"/>
    </isoform>
    <isoform>
        <id>O75051-2</id>
        <name>2</name>
        <sequence type="described" ref="VSP_017967 VSP_017968 VSP_017969"/>
    </isoform>
</comment>
<comment type="tissue specificity">
    <text evidence="7">Detected in fetal brain.</text>
</comment>
<comment type="similarity">
    <text evidence="11">Belongs to the plexin family.</text>
</comment>
<comment type="sequence caution" evidence="11">
    <conflict type="erroneous initiation">
        <sequence resource="EMBL-CDS" id="BAA32308"/>
    </conflict>
    <text>Extended N-terminus.</text>
</comment>
<organism>
    <name type="scientific">Homo sapiens</name>
    <name type="common">Human</name>
    <dbReference type="NCBI Taxonomy" id="9606"/>
    <lineage>
        <taxon>Eukaryota</taxon>
        <taxon>Metazoa</taxon>
        <taxon>Chordata</taxon>
        <taxon>Craniata</taxon>
        <taxon>Vertebrata</taxon>
        <taxon>Euteleostomi</taxon>
        <taxon>Mammalia</taxon>
        <taxon>Eutheria</taxon>
        <taxon>Euarchontoglires</taxon>
        <taxon>Primates</taxon>
        <taxon>Haplorrhini</taxon>
        <taxon>Catarrhini</taxon>
        <taxon>Hominidae</taxon>
        <taxon>Homo</taxon>
    </lineage>
</organism>
<evidence type="ECO:0000250" key="1"/>
<evidence type="ECO:0000255" key="2"/>
<evidence type="ECO:0000255" key="3">
    <source>
        <dbReference type="PROSITE-ProRule" id="PRU00352"/>
    </source>
</evidence>
<evidence type="ECO:0000269" key="4">
    <source>
    </source>
</evidence>
<evidence type="ECO:0000269" key="5">
    <source>
    </source>
</evidence>
<evidence type="ECO:0000269" key="6">
    <source>
    </source>
</evidence>
<evidence type="ECO:0000269" key="7">
    <source>
    </source>
</evidence>
<evidence type="ECO:0000269" key="8">
    <source>
    </source>
</evidence>
<evidence type="ECO:0000269" key="9">
    <source ref="9"/>
</evidence>
<evidence type="ECO:0000303" key="10">
    <source>
    </source>
</evidence>
<evidence type="ECO:0000305" key="11"/>
<evidence type="ECO:0007744" key="12">
    <source>
    </source>
</evidence>
<evidence type="ECO:0007829" key="13">
    <source>
        <dbReference type="PDB" id="3Q3J"/>
    </source>
</evidence>
<gene>
    <name type="primary">PLXNA2</name>
    <name type="synonym">KIAA0463</name>
    <name type="synonym">OCT</name>
    <name type="synonym">PLXN2</name>
    <name type="ORF">UNQ209/PRO235</name>
</gene>
<sequence length="1894" mass="211104">MEQRRPWPRALEVDSRSVVLLSVVWVLLAPPAAGMPQFSTFHSENRDWTFNHLTVHQGTGAVYVGAINRVYKLTGNLTIQVAHKTGPEEDNKSCYPPLIVQPCSEVLTLTNNVNKLLIIDYSENRLLACGSLYQGVCKLLRLDDLFILVEPSHKKEHYLSSVNKTGTMYGVIVRSEGEDGKLFIGTAVDGKQDYFPTLSSRKLPRDPESSAMLDYELHSDFVSSLIKIPSDTLALVSHFDIFYIYGFASGGFVYFLTVQPETPEGVAINSAGDLFYTSRIVRLCKDDPKFHSYVSLPFGCTRAGVEYRLLQAAYLAKPGDSLAQAFNITSQDDVLFAIFSKGQKQYHHPPDDSALCAFPIRAINLQIKERLQSCYQGEGNLELNWLLGKDVQCTKAPVPIDDNFCGLDINQPLGGSTPVEGLTLYTTSRDRMTSVASYVYNGYSVVFVGTKSGKLKKIRADGPPHGGVQYEMVSVLKDGSPILRDMAFSIDQRYLYVMSERQVTRVPVESCEQYTTCGECLSSGDPHCGWCALHNMCSRRDKCQQAWEPNRFAASISQCVSLAVHPSSISVSEHSRLLSLVVSDAPDLSAGIACAFGNLTEVEGQVSGSQVICISPGPKDVPVIPLDQDWFGLELQLRSKETGKIFVSTEFKFYNCSAHQLCLSCVNSAFRCHWCKYRNLCTHDPTTCSFQEGRINISEDCPQLVPTEEILIPVGEVKPITLKARNLPQPQSGQRGYECVLNIQGAIHRVPALRFNSSSVQCQNSSYQYDGMDISNLAVDFAVVWNGNFIIDNPQDLKVHLYKCAAQRESCGLCLKADRKFECGWCSGERRCTLHQHCTSPSSPWLDWSSHNVKCSNPQITEILTVSGPPEGGTRVTIHGVNLGLDFSEIAHHVQVAGVPCTPLPGEYIIAEQIVCEMGHALVGTTSGPVRLCIGECKPEFMTKSHQQYTFVNPSVLSLNPIRGPESGGTMVTITGHYLGAGSSVAVYLGNQTCEFYGRSMSEIVCVSPPSSNGLGPVPVSVSVDRAHVDSNLQFEYIDDPRVQRIEPEWSIASGHTPLTITGFNLDVIQEPRIRVKFNGKESVNVCKVVNTTTLTCLAPSLTTDYRPGLDTVERPDEFGFVFNNVQSLLIYNDTKFIYYPNPTFELLSPTGVLDQKPGSPIILKGKNLCPPASGGAKLNYTVLIGETPCAVTVSETQLLCEPPNLTGQHKVMVHVGGMVFSPGSVSVISDSLLTLPAIVSIAAGGSLLLIIVIIVLIAYKRKSRENDLTLKRLQMQMDNLESRVALECKEAFAELQTDINELTSDLDRSGIPYLDYRTYAMRVLFPGIEDHPVLRELEVQGNGQQHVEKALKLFAQLINNKVFLLTFIRTLELQRSFSMRDRGNVASLIMTGLQGRLEYATDVLKQLLSDLIDKNLENKNHPKLLLRRTESVAEKMLTNWFAFLLHKFLKECAGEPLFMLYCAIKQQMEKGPIDAITGEARYSLSEDKLIRQQIEYKTLILNCVNPDNENSPEIPVKVLNCDTITQVKEKILDAVYKNVPYSQRPRAVDMDLEWRQGRIARVVLQDEDITTKIEGDWKRLNTLMHYQVSDRSVVALVPKQTSSYNIPASASISRTSISRYDSSFRYTGSPDSLRSRAPMITPDLESGVKVWHLVKNHDHGDQKEGDRGSKMVSEIYLTRLLATKGTLQKFVDDLFETLFSTVHRGSALPLAIKYMFDFLDEQADRHSIHDTDVRHTWKSNCLPLRFWVNVIKNPQFVFDIHKGSITDACLSVVAQTFMDSCSTSEHRLGKDSPSNKLLYAKDIPSYKSWVERYYADIAKLPAISDQDMNAYLAEQSRLHAVEFNMLSALNEIYSYVSKYSEELIGALEQDEQARRQRLAYKVEQLINAMSIES</sequence>
<dbReference type="EMBL" id="AB007932">
    <property type="protein sequence ID" value="BAA32308.1"/>
    <property type="status" value="ALT_INIT"/>
    <property type="molecule type" value="mRNA"/>
</dbReference>
<dbReference type="EMBL" id="AY358496">
    <property type="protein sequence ID" value="AAQ88860.1"/>
    <property type="molecule type" value="mRNA"/>
</dbReference>
<dbReference type="EMBL" id="AL356275">
    <property type="status" value="NOT_ANNOTATED_CDS"/>
    <property type="molecule type" value="Genomic_DNA"/>
</dbReference>
<dbReference type="EMBL" id="AL590138">
    <property type="status" value="NOT_ANNOTATED_CDS"/>
    <property type="molecule type" value="Genomic_DNA"/>
</dbReference>
<dbReference type="EMBL" id="BC006193">
    <property type="protein sequence ID" value="AAH06193.2"/>
    <property type="molecule type" value="mRNA"/>
</dbReference>
<dbReference type="EMBL" id="BC009343">
    <property type="protein sequence ID" value="AAH09343.2"/>
    <property type="molecule type" value="mRNA"/>
</dbReference>
<dbReference type="EMBL" id="BC132676">
    <property type="protein sequence ID" value="AAI32677.2"/>
    <property type="molecule type" value="mRNA"/>
</dbReference>
<dbReference type="EMBL" id="BC136530">
    <property type="protein sequence ID" value="AAI36531.1"/>
    <property type="molecule type" value="mRNA"/>
</dbReference>
<dbReference type="EMBL" id="X87831">
    <property type="protein sequence ID" value="CAB57275.1"/>
    <property type="molecule type" value="mRNA"/>
</dbReference>
<dbReference type="CCDS" id="CCDS31013.1">
    <molecule id="O75051-1"/>
</dbReference>
<dbReference type="RefSeq" id="NP_079455.3">
    <molecule id="O75051-1"/>
    <property type="nucleotide sequence ID" value="NM_025179.3"/>
</dbReference>
<dbReference type="PDB" id="3Q3J">
    <property type="method" value="X-ray"/>
    <property type="resolution" value="1.97 A"/>
    <property type="chains" value="A=1490-1600"/>
</dbReference>
<dbReference type="PDBsum" id="3Q3J"/>
<dbReference type="SMR" id="O75051"/>
<dbReference type="BioGRID" id="111376">
    <property type="interactions" value="83"/>
</dbReference>
<dbReference type="CORUM" id="O75051"/>
<dbReference type="DIP" id="DIP-31672N"/>
<dbReference type="FunCoup" id="O75051">
    <property type="interactions" value="1030"/>
</dbReference>
<dbReference type="IntAct" id="O75051">
    <property type="interactions" value="77"/>
</dbReference>
<dbReference type="STRING" id="9606.ENSP00000356000"/>
<dbReference type="CarbonylDB" id="O75051"/>
<dbReference type="GlyCosmos" id="O75051">
    <property type="glycosylation" value="7 sites, No reported glycans"/>
</dbReference>
<dbReference type="GlyGen" id="O75051">
    <property type="glycosylation" value="12 sites, 7 N-linked glycans (2 sites), 1 O-linked glycan (1 site)"/>
</dbReference>
<dbReference type="iPTMnet" id="O75051"/>
<dbReference type="PhosphoSitePlus" id="O75051"/>
<dbReference type="SwissPalm" id="O75051"/>
<dbReference type="BioMuta" id="PLXNA2"/>
<dbReference type="jPOST" id="O75051"/>
<dbReference type="MassIVE" id="O75051"/>
<dbReference type="PaxDb" id="9606-ENSP00000356000"/>
<dbReference type="PeptideAtlas" id="O75051"/>
<dbReference type="ProteomicsDB" id="49723">
    <molecule id="O75051-1"/>
</dbReference>
<dbReference type="ProteomicsDB" id="49724">
    <molecule id="O75051-2"/>
</dbReference>
<dbReference type="Pumba" id="O75051"/>
<dbReference type="Antibodypedia" id="4060">
    <property type="antibodies" value="188 antibodies from 27 providers"/>
</dbReference>
<dbReference type="DNASU" id="5362"/>
<dbReference type="Ensembl" id="ENST00000367033.4">
    <molecule id="O75051-1"/>
    <property type="protein sequence ID" value="ENSP00000356000.3"/>
    <property type="gene ID" value="ENSG00000076356.7"/>
</dbReference>
<dbReference type="GeneID" id="5362"/>
<dbReference type="KEGG" id="hsa:5362"/>
<dbReference type="MANE-Select" id="ENST00000367033.4">
    <property type="protein sequence ID" value="ENSP00000356000.3"/>
    <property type="RefSeq nucleotide sequence ID" value="NM_025179.4"/>
    <property type="RefSeq protein sequence ID" value="NP_079455.3"/>
</dbReference>
<dbReference type="UCSC" id="uc001hgz.4">
    <molecule id="O75051-1"/>
    <property type="organism name" value="human"/>
</dbReference>
<dbReference type="AGR" id="HGNC:9100"/>
<dbReference type="CTD" id="5362"/>
<dbReference type="DisGeNET" id="5362"/>
<dbReference type="GeneCards" id="PLXNA2"/>
<dbReference type="HGNC" id="HGNC:9100">
    <property type="gene designation" value="PLXNA2"/>
</dbReference>
<dbReference type="HPA" id="ENSG00000076356">
    <property type="expression patterns" value="Tissue enhanced (pancreas)"/>
</dbReference>
<dbReference type="MalaCards" id="PLXNA2"/>
<dbReference type="MIM" id="601054">
    <property type="type" value="gene"/>
</dbReference>
<dbReference type="neXtProt" id="NX_O75051"/>
<dbReference type="OpenTargets" id="ENSG00000076356"/>
<dbReference type="PharmGKB" id="PA33426"/>
<dbReference type="VEuPathDB" id="HostDB:ENSG00000076356"/>
<dbReference type="eggNOG" id="KOG3610">
    <property type="taxonomic scope" value="Eukaryota"/>
</dbReference>
<dbReference type="GeneTree" id="ENSGT01050000244850"/>
<dbReference type="HOGENOM" id="CLU_001436_1_1_1"/>
<dbReference type="InParanoid" id="O75051"/>
<dbReference type="OMA" id="KYNEQLM"/>
<dbReference type="OrthoDB" id="125363at2759"/>
<dbReference type="PAN-GO" id="O75051">
    <property type="GO annotations" value="9 GO annotations based on evolutionary models"/>
</dbReference>
<dbReference type="PhylomeDB" id="O75051"/>
<dbReference type="TreeFam" id="TF312962"/>
<dbReference type="PathwayCommons" id="O75051"/>
<dbReference type="Reactome" id="R-HSA-399954">
    <property type="pathway name" value="Sema3A PAK dependent Axon repulsion"/>
</dbReference>
<dbReference type="Reactome" id="R-HSA-399955">
    <property type="pathway name" value="SEMA3A-Plexin repulsion signaling by inhibiting Integrin adhesion"/>
</dbReference>
<dbReference type="Reactome" id="R-HSA-399956">
    <property type="pathway name" value="CRMPs in Sema3A signaling"/>
</dbReference>
<dbReference type="Reactome" id="R-HSA-416700">
    <property type="pathway name" value="Other semaphorin interactions"/>
</dbReference>
<dbReference type="SignaLink" id="O75051"/>
<dbReference type="SIGNOR" id="O75051"/>
<dbReference type="BioGRID-ORCS" id="5362">
    <property type="hits" value="13 hits in 1146 CRISPR screens"/>
</dbReference>
<dbReference type="CD-CODE" id="FB4E32DD">
    <property type="entry name" value="Presynaptic clusters and postsynaptic densities"/>
</dbReference>
<dbReference type="ChiTaRS" id="PLXNA2">
    <property type="organism name" value="human"/>
</dbReference>
<dbReference type="EvolutionaryTrace" id="O75051"/>
<dbReference type="GeneWiki" id="PLXNA2"/>
<dbReference type="GenomeRNAi" id="5362"/>
<dbReference type="Pharos" id="O75051">
    <property type="development level" value="Tbio"/>
</dbReference>
<dbReference type="PRO" id="PR:O75051"/>
<dbReference type="Proteomes" id="UP000005640">
    <property type="component" value="Chromosome 1"/>
</dbReference>
<dbReference type="RNAct" id="O75051">
    <property type="molecule type" value="protein"/>
</dbReference>
<dbReference type="Bgee" id="ENSG00000076356">
    <property type="expression patterns" value="Expressed in ganglionic eminence and 180 other cell types or tissues"/>
</dbReference>
<dbReference type="GO" id="GO:0005886">
    <property type="term" value="C:plasma membrane"/>
    <property type="evidence" value="ECO:0000250"/>
    <property type="project" value="UniProtKB"/>
</dbReference>
<dbReference type="GO" id="GO:0002116">
    <property type="term" value="C:semaphorin receptor complex"/>
    <property type="evidence" value="ECO:0000318"/>
    <property type="project" value="GO_Central"/>
</dbReference>
<dbReference type="GO" id="GO:0042802">
    <property type="term" value="F:identical protein binding"/>
    <property type="evidence" value="ECO:0007669"/>
    <property type="project" value="Ensembl"/>
</dbReference>
<dbReference type="GO" id="GO:0017154">
    <property type="term" value="F:semaphorin receptor activity"/>
    <property type="evidence" value="ECO:0000250"/>
    <property type="project" value="UniProtKB"/>
</dbReference>
<dbReference type="GO" id="GO:0051642">
    <property type="term" value="P:centrosome localization"/>
    <property type="evidence" value="ECO:0007669"/>
    <property type="project" value="Ensembl"/>
</dbReference>
<dbReference type="GO" id="GO:0021935">
    <property type="term" value="P:cerebellar granule cell precursor tangential migration"/>
    <property type="evidence" value="ECO:0007669"/>
    <property type="project" value="Ensembl"/>
</dbReference>
<dbReference type="GO" id="GO:0060174">
    <property type="term" value="P:limb bud formation"/>
    <property type="evidence" value="ECO:0007669"/>
    <property type="project" value="Ensembl"/>
</dbReference>
<dbReference type="GO" id="GO:0021915">
    <property type="term" value="P:neural tube development"/>
    <property type="evidence" value="ECO:0007669"/>
    <property type="project" value="Ensembl"/>
</dbReference>
<dbReference type="GO" id="GO:0060037">
    <property type="term" value="P:pharyngeal system development"/>
    <property type="evidence" value="ECO:0007669"/>
    <property type="project" value="Ensembl"/>
</dbReference>
<dbReference type="GO" id="GO:0030334">
    <property type="term" value="P:regulation of cell migration"/>
    <property type="evidence" value="ECO:0000250"/>
    <property type="project" value="UniProtKB"/>
</dbReference>
<dbReference type="GO" id="GO:0071526">
    <property type="term" value="P:semaphorin-plexin signaling pathway"/>
    <property type="evidence" value="ECO:0000250"/>
    <property type="project" value="UniProtKB"/>
</dbReference>
<dbReference type="GO" id="GO:0001756">
    <property type="term" value="P:somitogenesis"/>
    <property type="evidence" value="ECO:0007669"/>
    <property type="project" value="Ensembl"/>
</dbReference>
<dbReference type="GO" id="GO:0007416">
    <property type="term" value="P:synapse assembly"/>
    <property type="evidence" value="ECO:0000318"/>
    <property type="project" value="GO_Central"/>
</dbReference>
<dbReference type="CDD" id="cd00603">
    <property type="entry name" value="IPT_PCSR"/>
    <property type="match status" value="1"/>
</dbReference>
<dbReference type="CDD" id="cd01180">
    <property type="entry name" value="IPT_plexin_repeat1"/>
    <property type="match status" value="1"/>
</dbReference>
<dbReference type="CDD" id="cd01179">
    <property type="entry name" value="IPT_plexin_repeat2"/>
    <property type="match status" value="1"/>
</dbReference>
<dbReference type="CDD" id="cd01181">
    <property type="entry name" value="IPT_plexin_repeat3"/>
    <property type="match status" value="1"/>
</dbReference>
<dbReference type="CDD" id="cd12790">
    <property type="entry name" value="RasGAP_plexin_A"/>
    <property type="match status" value="1"/>
</dbReference>
<dbReference type="CDD" id="cd11272">
    <property type="entry name" value="Sema_plexin_A2"/>
    <property type="match status" value="1"/>
</dbReference>
<dbReference type="FunFam" id="1.10.506.10:FF:000005">
    <property type="entry name" value="Plexin A1"/>
    <property type="match status" value="1"/>
</dbReference>
<dbReference type="FunFam" id="1.10.506.10:FF:000006">
    <property type="entry name" value="Plexin A1"/>
    <property type="match status" value="1"/>
</dbReference>
<dbReference type="FunFam" id="2.60.40.10:FF:000123">
    <property type="entry name" value="Plexin A1"/>
    <property type="match status" value="1"/>
</dbReference>
<dbReference type="FunFam" id="2.130.10.10:FF:000006">
    <property type="entry name" value="Plexin A2"/>
    <property type="match status" value="1"/>
</dbReference>
<dbReference type="FunFam" id="2.60.40.10:FF:000071">
    <property type="entry name" value="Plexin A2"/>
    <property type="match status" value="1"/>
</dbReference>
<dbReference type="FunFam" id="2.60.40.10:FF:000131">
    <property type="entry name" value="Plexin A2"/>
    <property type="match status" value="1"/>
</dbReference>
<dbReference type="FunFam" id="2.60.40.10:FF:000339">
    <property type="entry name" value="Plexin A2"/>
    <property type="match status" value="1"/>
</dbReference>
<dbReference type="FunFam" id="2.60.40.10:FF:000695">
    <property type="entry name" value="Plexin A2"/>
    <property type="match status" value="1"/>
</dbReference>
<dbReference type="FunFam" id="3.10.20.90:FF:000018">
    <property type="entry name" value="Plexin A2"/>
    <property type="match status" value="1"/>
</dbReference>
<dbReference type="FunFam" id="3.30.1680.10:FF:000032">
    <property type="entry name" value="Plexin A2"/>
    <property type="match status" value="1"/>
</dbReference>
<dbReference type="FunFam" id="2.60.40.10:FF:001973">
    <property type="entry name" value="Plexin A4, B"/>
    <property type="match status" value="1"/>
</dbReference>
<dbReference type="Gene3D" id="1.10.506.10">
    <property type="entry name" value="GTPase Activation - p120gap, domain 1"/>
    <property type="match status" value="1"/>
</dbReference>
<dbReference type="Gene3D" id="2.60.40.10">
    <property type="entry name" value="Immunoglobulins"/>
    <property type="match status" value="6"/>
</dbReference>
<dbReference type="Gene3D" id="3.10.20.90">
    <property type="entry name" value="Phosphatidylinositol 3-kinase Catalytic Subunit, Chain A, domain 1"/>
    <property type="match status" value="1"/>
</dbReference>
<dbReference type="Gene3D" id="2.130.10.10">
    <property type="entry name" value="YVTN repeat-like/Quinoprotein amine dehydrogenase"/>
    <property type="match status" value="1"/>
</dbReference>
<dbReference type="InterPro" id="IPR013783">
    <property type="entry name" value="Ig-like_fold"/>
</dbReference>
<dbReference type="InterPro" id="IPR014756">
    <property type="entry name" value="Ig_E-set"/>
</dbReference>
<dbReference type="InterPro" id="IPR002909">
    <property type="entry name" value="IPT_dom"/>
</dbReference>
<dbReference type="InterPro" id="IPR031148">
    <property type="entry name" value="Plexin"/>
</dbReference>
<dbReference type="InterPro" id="IPR042826">
    <property type="entry name" value="Plexin-A2_sema"/>
</dbReference>
<dbReference type="InterPro" id="IPR013548">
    <property type="entry name" value="Plexin_cytoplasmic_RasGAP_dom"/>
</dbReference>
<dbReference type="InterPro" id="IPR046800">
    <property type="entry name" value="Plexin_RBD"/>
</dbReference>
<dbReference type="InterPro" id="IPR002165">
    <property type="entry name" value="Plexin_repeat"/>
</dbReference>
<dbReference type="InterPro" id="IPR016201">
    <property type="entry name" value="PSI"/>
</dbReference>
<dbReference type="InterPro" id="IPR008936">
    <property type="entry name" value="Rho_GTPase_activation_prot"/>
</dbReference>
<dbReference type="InterPro" id="IPR001627">
    <property type="entry name" value="Semap_dom"/>
</dbReference>
<dbReference type="InterPro" id="IPR036352">
    <property type="entry name" value="Semap_dom_sf"/>
</dbReference>
<dbReference type="InterPro" id="IPR041019">
    <property type="entry name" value="TIG1_plexin"/>
</dbReference>
<dbReference type="InterPro" id="IPR041362">
    <property type="entry name" value="TIG2_plexin"/>
</dbReference>
<dbReference type="InterPro" id="IPR015943">
    <property type="entry name" value="WD40/YVTN_repeat-like_dom_sf"/>
</dbReference>
<dbReference type="PANTHER" id="PTHR22625">
    <property type="entry name" value="PLEXIN"/>
    <property type="match status" value="1"/>
</dbReference>
<dbReference type="PANTHER" id="PTHR22625:SF37">
    <property type="entry name" value="PLEXIN-A2"/>
    <property type="match status" value="1"/>
</dbReference>
<dbReference type="Pfam" id="PF08337">
    <property type="entry name" value="Plexin_cytopl"/>
    <property type="match status" value="1"/>
</dbReference>
<dbReference type="Pfam" id="PF20170">
    <property type="entry name" value="Plexin_RBD"/>
    <property type="match status" value="1"/>
</dbReference>
<dbReference type="Pfam" id="PF01437">
    <property type="entry name" value="PSI"/>
    <property type="match status" value="2"/>
</dbReference>
<dbReference type="Pfam" id="PF24479">
    <property type="entry name" value="PSI_PlexinA-B"/>
    <property type="match status" value="1"/>
</dbReference>
<dbReference type="Pfam" id="PF01403">
    <property type="entry name" value="Sema"/>
    <property type="match status" value="1"/>
</dbReference>
<dbReference type="Pfam" id="PF01833">
    <property type="entry name" value="TIG"/>
    <property type="match status" value="4"/>
</dbReference>
<dbReference type="Pfam" id="PF18020">
    <property type="entry name" value="TIG_2"/>
    <property type="match status" value="1"/>
</dbReference>
<dbReference type="Pfam" id="PF17960">
    <property type="entry name" value="TIG_plexin"/>
    <property type="match status" value="1"/>
</dbReference>
<dbReference type="SMART" id="SM00429">
    <property type="entry name" value="IPT"/>
    <property type="match status" value="4"/>
</dbReference>
<dbReference type="SMART" id="SM00423">
    <property type="entry name" value="PSI"/>
    <property type="match status" value="3"/>
</dbReference>
<dbReference type="SMART" id="SM00630">
    <property type="entry name" value="Sema"/>
    <property type="match status" value="1"/>
</dbReference>
<dbReference type="SUPFAM" id="SSF81296">
    <property type="entry name" value="E set domains"/>
    <property type="match status" value="4"/>
</dbReference>
<dbReference type="SUPFAM" id="SSF48350">
    <property type="entry name" value="GTPase activation domain, GAP"/>
    <property type="match status" value="1"/>
</dbReference>
<dbReference type="SUPFAM" id="SSF103575">
    <property type="entry name" value="Plexin repeat"/>
    <property type="match status" value="2"/>
</dbReference>
<dbReference type="SUPFAM" id="SSF101912">
    <property type="entry name" value="Sema domain"/>
    <property type="match status" value="1"/>
</dbReference>
<dbReference type="PROSITE" id="PS51004">
    <property type="entry name" value="SEMA"/>
    <property type="match status" value="1"/>
</dbReference>
<reference key="1">
    <citation type="journal article" date="1997" name="DNA Res.">
        <title>Characterization of cDNA clones in size-fractionated cDNA libraries from human brain.</title>
        <authorList>
            <person name="Seki N."/>
            <person name="Ohira M."/>
            <person name="Nagase T."/>
            <person name="Ishikawa K."/>
            <person name="Miyajima N."/>
            <person name="Nakajima D."/>
            <person name="Nomura N."/>
            <person name="Ohara O."/>
        </authorList>
    </citation>
    <scope>NUCLEOTIDE SEQUENCE [LARGE SCALE MRNA] (ISOFORM 1)</scope>
    <scope>VARIANT GLY-369</scope>
    <source>
        <tissue>Brain</tissue>
    </source>
</reference>
<reference key="2">
    <citation type="journal article" date="2003" name="Genome Res.">
        <title>The secreted protein discovery initiative (SPDI), a large-scale effort to identify novel human secreted and transmembrane proteins: a bioinformatics assessment.</title>
        <authorList>
            <person name="Clark H.F."/>
            <person name="Gurney A.L."/>
            <person name="Abaya E."/>
            <person name="Baker K."/>
            <person name="Baldwin D.T."/>
            <person name="Brush J."/>
            <person name="Chen J."/>
            <person name="Chow B."/>
            <person name="Chui C."/>
            <person name="Crowley C."/>
            <person name="Currell B."/>
            <person name="Deuel B."/>
            <person name="Dowd P."/>
            <person name="Eaton D."/>
            <person name="Foster J.S."/>
            <person name="Grimaldi C."/>
            <person name="Gu Q."/>
            <person name="Hass P.E."/>
            <person name="Heldens S."/>
            <person name="Huang A."/>
            <person name="Kim H.S."/>
            <person name="Klimowski L."/>
            <person name="Jin Y."/>
            <person name="Johnson S."/>
            <person name="Lee J."/>
            <person name="Lewis L."/>
            <person name="Liao D."/>
            <person name="Mark M.R."/>
            <person name="Robbie E."/>
            <person name="Sanchez C."/>
            <person name="Schoenfeld J."/>
            <person name="Seshagiri S."/>
            <person name="Simmons L."/>
            <person name="Singh J."/>
            <person name="Smith V."/>
            <person name="Stinson J."/>
            <person name="Vagts A."/>
            <person name="Vandlen R.L."/>
            <person name="Watanabe C."/>
            <person name="Wieand D."/>
            <person name="Woods K."/>
            <person name="Xie M.-H."/>
            <person name="Yansura D.G."/>
            <person name="Yi S."/>
            <person name="Yu G."/>
            <person name="Yuan J."/>
            <person name="Zhang M."/>
            <person name="Zhang Z."/>
            <person name="Goddard A.D."/>
            <person name="Wood W.I."/>
            <person name="Godowski P.J."/>
            <person name="Gray A.M."/>
        </authorList>
    </citation>
    <scope>NUCLEOTIDE SEQUENCE [LARGE SCALE MRNA] (ISOFORM 2)</scope>
    <scope>VARIANT GLN-5</scope>
</reference>
<reference key="3">
    <citation type="journal article" date="2006" name="Nature">
        <title>The DNA sequence and biological annotation of human chromosome 1.</title>
        <authorList>
            <person name="Gregory S.G."/>
            <person name="Barlow K.F."/>
            <person name="McLay K.E."/>
            <person name="Kaul R."/>
            <person name="Swarbreck D."/>
            <person name="Dunham A."/>
            <person name="Scott C.E."/>
            <person name="Howe K.L."/>
            <person name="Woodfine K."/>
            <person name="Spencer C.C.A."/>
            <person name="Jones M.C."/>
            <person name="Gillson C."/>
            <person name="Searle S."/>
            <person name="Zhou Y."/>
            <person name="Kokocinski F."/>
            <person name="McDonald L."/>
            <person name="Evans R."/>
            <person name="Phillips K."/>
            <person name="Atkinson A."/>
            <person name="Cooper R."/>
            <person name="Jones C."/>
            <person name="Hall R.E."/>
            <person name="Andrews T.D."/>
            <person name="Lloyd C."/>
            <person name="Ainscough R."/>
            <person name="Almeida J.P."/>
            <person name="Ambrose K.D."/>
            <person name="Anderson F."/>
            <person name="Andrew R.W."/>
            <person name="Ashwell R.I.S."/>
            <person name="Aubin K."/>
            <person name="Babbage A.K."/>
            <person name="Bagguley C.L."/>
            <person name="Bailey J."/>
            <person name="Beasley H."/>
            <person name="Bethel G."/>
            <person name="Bird C.P."/>
            <person name="Bray-Allen S."/>
            <person name="Brown J.Y."/>
            <person name="Brown A.J."/>
            <person name="Buckley D."/>
            <person name="Burton J."/>
            <person name="Bye J."/>
            <person name="Carder C."/>
            <person name="Chapman J.C."/>
            <person name="Clark S.Y."/>
            <person name="Clarke G."/>
            <person name="Clee C."/>
            <person name="Cobley V."/>
            <person name="Collier R.E."/>
            <person name="Corby N."/>
            <person name="Coville G.J."/>
            <person name="Davies J."/>
            <person name="Deadman R."/>
            <person name="Dunn M."/>
            <person name="Earthrowl M."/>
            <person name="Ellington A.G."/>
            <person name="Errington H."/>
            <person name="Frankish A."/>
            <person name="Frankland J."/>
            <person name="French L."/>
            <person name="Garner P."/>
            <person name="Garnett J."/>
            <person name="Gay L."/>
            <person name="Ghori M.R.J."/>
            <person name="Gibson R."/>
            <person name="Gilby L.M."/>
            <person name="Gillett W."/>
            <person name="Glithero R.J."/>
            <person name="Grafham D.V."/>
            <person name="Griffiths C."/>
            <person name="Griffiths-Jones S."/>
            <person name="Grocock R."/>
            <person name="Hammond S."/>
            <person name="Harrison E.S.I."/>
            <person name="Hart E."/>
            <person name="Haugen E."/>
            <person name="Heath P.D."/>
            <person name="Holmes S."/>
            <person name="Holt K."/>
            <person name="Howden P.J."/>
            <person name="Hunt A.R."/>
            <person name="Hunt S.E."/>
            <person name="Hunter G."/>
            <person name="Isherwood J."/>
            <person name="James R."/>
            <person name="Johnson C."/>
            <person name="Johnson D."/>
            <person name="Joy A."/>
            <person name="Kay M."/>
            <person name="Kershaw J.K."/>
            <person name="Kibukawa M."/>
            <person name="Kimberley A.M."/>
            <person name="King A."/>
            <person name="Knights A.J."/>
            <person name="Lad H."/>
            <person name="Laird G."/>
            <person name="Lawlor S."/>
            <person name="Leongamornlert D.A."/>
            <person name="Lloyd D.M."/>
            <person name="Loveland J."/>
            <person name="Lovell J."/>
            <person name="Lush M.J."/>
            <person name="Lyne R."/>
            <person name="Martin S."/>
            <person name="Mashreghi-Mohammadi M."/>
            <person name="Matthews L."/>
            <person name="Matthews N.S.W."/>
            <person name="McLaren S."/>
            <person name="Milne S."/>
            <person name="Mistry S."/>
            <person name="Moore M.J.F."/>
            <person name="Nickerson T."/>
            <person name="O'Dell C.N."/>
            <person name="Oliver K."/>
            <person name="Palmeiri A."/>
            <person name="Palmer S.A."/>
            <person name="Parker A."/>
            <person name="Patel D."/>
            <person name="Pearce A.V."/>
            <person name="Peck A.I."/>
            <person name="Pelan S."/>
            <person name="Phelps K."/>
            <person name="Phillimore B.J."/>
            <person name="Plumb R."/>
            <person name="Rajan J."/>
            <person name="Raymond C."/>
            <person name="Rouse G."/>
            <person name="Saenphimmachak C."/>
            <person name="Sehra H.K."/>
            <person name="Sheridan E."/>
            <person name="Shownkeen R."/>
            <person name="Sims S."/>
            <person name="Skuce C.D."/>
            <person name="Smith M."/>
            <person name="Steward C."/>
            <person name="Subramanian S."/>
            <person name="Sycamore N."/>
            <person name="Tracey A."/>
            <person name="Tromans A."/>
            <person name="Van Helmond Z."/>
            <person name="Wall M."/>
            <person name="Wallis J.M."/>
            <person name="White S."/>
            <person name="Whitehead S.L."/>
            <person name="Wilkinson J.E."/>
            <person name="Willey D.L."/>
            <person name="Williams H."/>
            <person name="Wilming L."/>
            <person name="Wray P.W."/>
            <person name="Wu Z."/>
            <person name="Coulson A."/>
            <person name="Vaudin M."/>
            <person name="Sulston J.E."/>
            <person name="Durbin R.M."/>
            <person name="Hubbard T."/>
            <person name="Wooster R."/>
            <person name="Dunham I."/>
            <person name="Carter N.P."/>
            <person name="McVean G."/>
            <person name="Ross M.T."/>
            <person name="Harrow J."/>
            <person name="Olson M.V."/>
            <person name="Beck S."/>
            <person name="Rogers J."/>
            <person name="Bentley D.R."/>
        </authorList>
    </citation>
    <scope>NUCLEOTIDE SEQUENCE [LARGE SCALE GENOMIC DNA]</scope>
</reference>
<reference key="4">
    <citation type="journal article" date="2004" name="Genome Res.">
        <title>The status, quality, and expansion of the NIH full-length cDNA project: the Mammalian Gene Collection (MGC).</title>
        <authorList>
            <consortium name="The MGC Project Team"/>
        </authorList>
    </citation>
    <scope>NUCLEOTIDE SEQUENCE [LARGE SCALE MRNA] (ISOFORM 1)</scope>
    <scope>VARIANT GLY-369</scope>
    <source>
        <tissue>Brain</tissue>
        <tissue>Placenta</tissue>
    </source>
</reference>
<reference key="5">
    <citation type="journal article" date="1996" name="Proc. Natl. Acad. Sci. U.S.A.">
        <title>A family of transmembrane proteins with homology to the MET-hepatocyte growth factor receptor.</title>
        <authorList>
            <person name="Maestrini E."/>
            <person name="Tamagnone L."/>
            <person name="Longati P."/>
            <person name="Cremona O."/>
            <person name="Gulisano M."/>
            <person name="Bione S."/>
            <person name="Tamanini F."/>
            <person name="Neel B.G."/>
            <person name="Toniolo D."/>
            <person name="Comoglio P.M."/>
        </authorList>
    </citation>
    <scope>NUCLEOTIDE SEQUENCE [MRNA] OF 447-1774 (ISOFORM 1)</scope>
    <scope>TISSUE SPECIFICITY</scope>
    <source>
        <tissue>Skeletal muscle</tissue>
    </source>
</reference>
<reference key="6">
    <citation type="journal article" date="1999" name="Cell">
        <title>Plexins are a large family of receptors for transmembrane, secreted and GPI-anchored semaphorins in vertebrates.</title>
        <authorList>
            <person name="Tamagnone L."/>
            <person name="Artigiani S."/>
            <person name="Chen H."/>
            <person name="He Z."/>
            <person name="Ming G.-L."/>
            <person name="Song H.-L."/>
            <person name="Chedotal A."/>
            <person name="Winberg M.L."/>
            <person name="Goodman C.S."/>
            <person name="Poo M.-M."/>
            <person name="Tessier-Lavigne M."/>
            <person name="Comoglio P.M."/>
        </authorList>
    </citation>
    <scope>FUNCTION</scope>
</reference>
<reference key="7">
    <citation type="journal article" date="2009" name="J. Proteome Res.">
        <title>Glycoproteomics analysis of human liver tissue by combination of multiple enzyme digestion and hydrazide chemistry.</title>
        <authorList>
            <person name="Chen R."/>
            <person name="Jiang X."/>
            <person name="Sun D."/>
            <person name="Han G."/>
            <person name="Wang F."/>
            <person name="Ye M."/>
            <person name="Wang L."/>
            <person name="Zou H."/>
        </authorList>
    </citation>
    <scope>GLYCOSYLATION [LARGE SCALE ANALYSIS] AT ASN-91</scope>
    <source>
        <tissue>Liver</tissue>
    </source>
</reference>
<reference key="8">
    <citation type="journal article" date="2013" name="J. Proteome Res.">
        <title>Toward a comprehensive characterization of a human cancer cell phosphoproteome.</title>
        <authorList>
            <person name="Zhou H."/>
            <person name="Di Palma S."/>
            <person name="Preisinger C."/>
            <person name="Peng M."/>
            <person name="Polat A.N."/>
            <person name="Heck A.J."/>
            <person name="Mohammed S."/>
        </authorList>
    </citation>
    <scope>PHOSPHORYLATION [LARGE SCALE ANALYSIS] AT SER-1612</scope>
    <scope>IDENTIFICATION BY MASS SPECTROMETRY [LARGE SCALE ANALYSIS]</scope>
    <source>
        <tissue>Cervix carcinoma</tissue>
    </source>
</reference>
<reference key="9">
    <citation type="submission" date="2011-01" db="PDB data bank">
        <title>Crystal structure of plexin A2 RBD in complex with RND1.</title>
        <authorList>
            <consortium name="Structural genomics consortium (SGC)"/>
        </authorList>
    </citation>
    <scope>X-RAY CRYSTALLOGRAPHY (1.97 ANGSTROMS) OF 1490-1600 IN COMPLEX WITH RND1</scope>
</reference>
<feature type="signal peptide" evidence="2">
    <location>
        <begin position="1"/>
        <end position="34"/>
    </location>
</feature>
<feature type="chain" id="PRO_0000232747" description="Plexin-A2">
    <location>
        <begin position="35"/>
        <end position="1894"/>
    </location>
</feature>
<feature type="topological domain" description="Extracellular" evidence="2">
    <location>
        <begin position="35"/>
        <end position="1237"/>
    </location>
</feature>
<feature type="transmembrane region" description="Helical" evidence="2">
    <location>
        <begin position="1238"/>
        <end position="1258"/>
    </location>
</feature>
<feature type="topological domain" description="Cytoplasmic" evidence="2">
    <location>
        <begin position="1259"/>
        <end position="1894"/>
    </location>
</feature>
<feature type="domain" description="Sema" evidence="3">
    <location>
        <begin position="35"/>
        <end position="508"/>
    </location>
</feature>
<feature type="domain" description="IPT/TIG 1">
    <location>
        <begin position="858"/>
        <end position="951"/>
    </location>
</feature>
<feature type="domain" description="IPT/TIG 2">
    <location>
        <begin position="954"/>
        <end position="1037"/>
    </location>
</feature>
<feature type="domain" description="IPT/TIG 3">
    <location>
        <begin position="1041"/>
        <end position="1139"/>
    </location>
</feature>
<feature type="domain" description="IPT/TIG 4">
    <location>
        <begin position="1143"/>
        <end position="1228"/>
    </location>
</feature>
<feature type="coiled-coil region" evidence="2">
    <location>
        <begin position="1261"/>
        <end position="1310"/>
    </location>
</feature>
<feature type="modified residue" description="Phosphoserine" evidence="12">
    <location>
        <position position="1612"/>
    </location>
</feature>
<feature type="glycosylation site" description="N-linked (GlcNAc...) asparagine">
    <location>
        <position position="76"/>
    </location>
</feature>
<feature type="glycosylation site" description="N-linked (GlcNAc...) asparagine" evidence="2">
    <location>
        <position position="91"/>
    </location>
</feature>
<feature type="glycosylation site" description="N-linked (GlcNAc...) asparagine" evidence="2">
    <location>
        <position position="327"/>
    </location>
</feature>
<feature type="glycosylation site" description="N-linked (GlcNAc...) asparagine" evidence="2">
    <location>
        <position position="598"/>
    </location>
</feature>
<feature type="glycosylation site" description="N-linked (GlcNAc...) asparagine" evidence="2">
    <location>
        <position position="696"/>
    </location>
</feature>
<feature type="glycosylation site" description="N-linked (GlcNAc...) asparagine" evidence="2">
    <location>
        <position position="756"/>
    </location>
</feature>
<feature type="glycosylation site" description="N-linked (GlcNAc...) asparagine" evidence="2">
    <location>
        <position position="1205"/>
    </location>
</feature>
<feature type="disulfide bond" evidence="3">
    <location>
        <begin position="94"/>
        <end position="103"/>
    </location>
</feature>
<feature type="disulfide bond" evidence="3">
    <location>
        <begin position="129"/>
        <end position="137"/>
    </location>
</feature>
<feature type="disulfide bond" evidence="3">
    <location>
        <begin position="284"/>
        <end position="405"/>
    </location>
</feature>
<feature type="disulfide bond" evidence="3">
    <location>
        <begin position="300"/>
        <end position="356"/>
    </location>
</feature>
<feature type="disulfide bond" evidence="3">
    <location>
        <begin position="374"/>
        <end position="393"/>
    </location>
</feature>
<feature type="disulfide bond" evidence="3">
    <location>
        <begin position="511"/>
        <end position="528"/>
    </location>
</feature>
<feature type="disulfide bond" evidence="3">
    <location>
        <begin position="517"/>
        <end position="559"/>
    </location>
</feature>
<feature type="disulfide bond" evidence="3">
    <location>
        <begin position="520"/>
        <end position="537"/>
    </location>
</feature>
<feature type="disulfide bond" evidence="3">
    <location>
        <begin position="531"/>
        <end position="543"/>
    </location>
</feature>
<feature type="disulfide bond" evidence="3">
    <location>
        <begin position="594"/>
        <end position="613"/>
    </location>
</feature>
<feature type="splice variant" id="VSP_017967" description="In isoform 2." evidence="10">
    <original>M</original>
    <variation>MGTLGQASLFAPPGNYFWSDHSALCFAESCEGQPGKVEQMSTHRSRLLTAAPLSM</variation>
    <location>
        <position position="1"/>
    </location>
</feature>
<feature type="splice variant" id="VSP_017968" description="In isoform 2." evidence="10">
    <original>IRADGPPHGGVQYEMVSVLKDGSPILRDMAFSIDQRYLYVM</original>
    <variation>VRVYEFRCSNAIHLLSKESLLEGSYWWRFNYRQLYFLGEQR</variation>
    <location>
        <begin position="458"/>
        <end position="498"/>
    </location>
</feature>
<feature type="splice variant" id="VSP_017969" description="In isoform 2." evidence="10">
    <location>
        <begin position="499"/>
        <end position="1894"/>
    </location>
</feature>
<feature type="sequence variant" id="VAR_056722" description="In dbSNP:rs2782948." evidence="5">
    <original>R</original>
    <variation>Q</variation>
    <location>
        <position position="5"/>
    </location>
</feature>
<feature type="sequence variant" id="VAR_059554" description="In dbSNP:rs11119014.">
    <original>Q</original>
    <variation>R</variation>
    <location>
        <position position="57"/>
    </location>
</feature>
<feature type="sequence variant" id="VAR_059555" description="In dbSNP:rs3748735.">
    <original>A</original>
    <variation>T</variation>
    <location>
        <position position="267"/>
    </location>
</feature>
<feature type="sequence variant" id="VAR_058201" description="In dbSNP:rs4844658." evidence="6 8">
    <original>E</original>
    <variation>G</variation>
    <location>
        <position position="369"/>
    </location>
</feature>
<feature type="sequence variant" id="VAR_059556" description="In dbSNP:rs17011882.">
    <original>A</original>
    <variation>G</variation>
    <location>
        <position position="805"/>
    </location>
</feature>
<feature type="sequence variant" id="VAR_059557" description="In dbSNP:rs12240051.">
    <original>A</original>
    <variation>T</variation>
    <location>
        <position position="1443"/>
    </location>
</feature>
<feature type="sequence conflict" description="In Ref. 2; AAQ88860." evidence="11" ref="2">
    <original>C</original>
    <variation>R</variation>
    <location>
        <position position="94"/>
    </location>
</feature>
<feature type="sequence conflict" description="In Ref. 5; CAB57275." evidence="11" ref="5">
    <original>L</original>
    <variation>P</variation>
    <location>
        <position position="599"/>
    </location>
</feature>
<feature type="sequence conflict" description="In Ref. 5; CAB57275." evidence="11" ref="5">
    <original>L</original>
    <variation>P</variation>
    <location>
        <position position="661"/>
    </location>
</feature>
<feature type="sequence conflict" description="In Ref. 4; AAH09343." evidence="11" ref="4">
    <original>N</original>
    <variation>V</variation>
    <location>
        <position position="1085"/>
    </location>
</feature>
<feature type="sequence conflict" description="In Ref. 5; CAB57275." evidence="11" ref="5">
    <original>F</original>
    <variation>L</variation>
    <location>
        <position position="1378"/>
    </location>
</feature>
<feature type="sequence conflict" description="In Ref. 4; AAH09343." evidence="11" ref="4">
    <original>F</original>
    <variation>L</variation>
    <location>
        <position position="1700"/>
    </location>
</feature>
<feature type="strand" evidence="13">
    <location>
        <begin position="1499"/>
        <end position="1504"/>
    </location>
</feature>
<feature type="strand" evidence="13">
    <location>
        <begin position="1515"/>
        <end position="1520"/>
    </location>
</feature>
<feature type="helix" evidence="13">
    <location>
        <begin position="1525"/>
        <end position="1536"/>
    </location>
</feature>
<feature type="helix" evidence="13">
    <location>
        <begin position="1548"/>
        <end position="1550"/>
    </location>
</feature>
<feature type="strand" evidence="13">
    <location>
        <begin position="1551"/>
        <end position="1557"/>
    </location>
</feature>
<feature type="turn" evidence="13">
    <location>
        <begin position="1558"/>
        <end position="1560"/>
    </location>
</feature>
<feature type="strand" evidence="13">
    <location>
        <begin position="1561"/>
        <end position="1565"/>
    </location>
</feature>
<feature type="strand" evidence="13">
    <location>
        <begin position="1567"/>
        <end position="1569"/>
    </location>
</feature>
<feature type="helix" evidence="13">
    <location>
        <begin position="1584"/>
        <end position="1587"/>
    </location>
</feature>
<feature type="strand" evidence="13">
    <location>
        <begin position="1594"/>
        <end position="1599"/>
    </location>
</feature>